<sequence>MPMPPDDSPLSLLPDHPLAAHNTFGIAATARYAARITHAAQFEALHRDPRVASLPQLVLGGGSNVVFTRDFDGVVLLDEIGGRRVVREDDDAWYVEAGGGEPWHAFVAWTLEQGMPGLENLALIPGTVGAAPIQNIGAYGLEMKAYFDSLIAVELATGRSERFDAARCAFGYRDSFFKRDGRGRFAIVAVTFRLPKRWTPRLGYADVTRELDARGIAPDAATPRDVFDAVVAIRRAKLPDPRVLGNAGSFFKNPVIDAAQFDALRARAPDVVSYPQPDGQVKLAAGWLIDQCGWKGRALGAAAVHERQALVLVNRGGATGVDVLALARAIQHDVRVRFGVELEPEPVCL</sequence>
<name>MURB_BURVG</name>
<keyword id="KW-0131">Cell cycle</keyword>
<keyword id="KW-0132">Cell division</keyword>
<keyword id="KW-0133">Cell shape</keyword>
<keyword id="KW-0961">Cell wall biogenesis/degradation</keyword>
<keyword id="KW-0963">Cytoplasm</keyword>
<keyword id="KW-0274">FAD</keyword>
<keyword id="KW-0285">Flavoprotein</keyword>
<keyword id="KW-0521">NADP</keyword>
<keyword id="KW-0560">Oxidoreductase</keyword>
<keyword id="KW-0573">Peptidoglycan synthesis</keyword>
<organism>
    <name type="scientific">Burkholderia vietnamiensis (strain G4 / LMG 22486)</name>
    <name type="common">Burkholderia cepacia (strain R1808)</name>
    <dbReference type="NCBI Taxonomy" id="269482"/>
    <lineage>
        <taxon>Bacteria</taxon>
        <taxon>Pseudomonadati</taxon>
        <taxon>Pseudomonadota</taxon>
        <taxon>Betaproteobacteria</taxon>
        <taxon>Burkholderiales</taxon>
        <taxon>Burkholderiaceae</taxon>
        <taxon>Burkholderia</taxon>
        <taxon>Burkholderia cepacia complex</taxon>
    </lineage>
</organism>
<proteinExistence type="inferred from homology"/>
<feature type="chain" id="PRO_1000002876" description="UDP-N-acetylenolpyruvoylglucosamine reductase">
    <location>
        <begin position="1"/>
        <end position="349"/>
    </location>
</feature>
<feature type="domain" description="FAD-binding PCMH-type" evidence="1">
    <location>
        <begin position="25"/>
        <end position="197"/>
    </location>
</feature>
<feature type="active site" evidence="1">
    <location>
        <position position="173"/>
    </location>
</feature>
<feature type="active site" description="Proton donor" evidence="1">
    <location>
        <position position="249"/>
    </location>
</feature>
<feature type="active site" evidence="1">
    <location>
        <position position="345"/>
    </location>
</feature>
<dbReference type="EC" id="1.3.1.98" evidence="1"/>
<dbReference type="EMBL" id="CP000614">
    <property type="protein sequence ID" value="ABO55639.1"/>
    <property type="molecule type" value="Genomic_DNA"/>
</dbReference>
<dbReference type="SMR" id="A4JH86"/>
<dbReference type="KEGG" id="bvi:Bcep1808_2647"/>
<dbReference type="eggNOG" id="COG0812">
    <property type="taxonomic scope" value="Bacteria"/>
</dbReference>
<dbReference type="HOGENOM" id="CLU_035304_0_0_4"/>
<dbReference type="UniPathway" id="UPA00219"/>
<dbReference type="Proteomes" id="UP000002287">
    <property type="component" value="Chromosome 1"/>
</dbReference>
<dbReference type="GO" id="GO:0005829">
    <property type="term" value="C:cytosol"/>
    <property type="evidence" value="ECO:0007669"/>
    <property type="project" value="TreeGrafter"/>
</dbReference>
<dbReference type="GO" id="GO:0071949">
    <property type="term" value="F:FAD binding"/>
    <property type="evidence" value="ECO:0007669"/>
    <property type="project" value="InterPro"/>
</dbReference>
<dbReference type="GO" id="GO:0008762">
    <property type="term" value="F:UDP-N-acetylmuramate dehydrogenase activity"/>
    <property type="evidence" value="ECO:0007669"/>
    <property type="project" value="UniProtKB-UniRule"/>
</dbReference>
<dbReference type="GO" id="GO:0051301">
    <property type="term" value="P:cell division"/>
    <property type="evidence" value="ECO:0007669"/>
    <property type="project" value="UniProtKB-KW"/>
</dbReference>
<dbReference type="GO" id="GO:0071555">
    <property type="term" value="P:cell wall organization"/>
    <property type="evidence" value="ECO:0007669"/>
    <property type="project" value="UniProtKB-KW"/>
</dbReference>
<dbReference type="GO" id="GO:0009252">
    <property type="term" value="P:peptidoglycan biosynthetic process"/>
    <property type="evidence" value="ECO:0007669"/>
    <property type="project" value="UniProtKB-UniRule"/>
</dbReference>
<dbReference type="GO" id="GO:0008360">
    <property type="term" value="P:regulation of cell shape"/>
    <property type="evidence" value="ECO:0007669"/>
    <property type="project" value="UniProtKB-KW"/>
</dbReference>
<dbReference type="Gene3D" id="3.30.465.10">
    <property type="match status" value="1"/>
</dbReference>
<dbReference type="Gene3D" id="3.90.78.10">
    <property type="entry name" value="UDP-N-acetylenolpyruvoylglucosamine reductase, C-terminal domain"/>
    <property type="match status" value="1"/>
</dbReference>
<dbReference type="Gene3D" id="3.30.43.10">
    <property type="entry name" value="Uridine Diphospho-n-acetylenolpyruvylglucosamine Reductase, domain 2"/>
    <property type="match status" value="1"/>
</dbReference>
<dbReference type="HAMAP" id="MF_00037">
    <property type="entry name" value="MurB"/>
    <property type="match status" value="1"/>
</dbReference>
<dbReference type="InterPro" id="IPR016166">
    <property type="entry name" value="FAD-bd_PCMH"/>
</dbReference>
<dbReference type="InterPro" id="IPR036318">
    <property type="entry name" value="FAD-bd_PCMH-like_sf"/>
</dbReference>
<dbReference type="InterPro" id="IPR016167">
    <property type="entry name" value="FAD-bd_PCMH_sub1"/>
</dbReference>
<dbReference type="InterPro" id="IPR016169">
    <property type="entry name" value="FAD-bd_PCMH_sub2"/>
</dbReference>
<dbReference type="InterPro" id="IPR003170">
    <property type="entry name" value="MurB"/>
</dbReference>
<dbReference type="InterPro" id="IPR011601">
    <property type="entry name" value="MurB_C"/>
</dbReference>
<dbReference type="InterPro" id="IPR036635">
    <property type="entry name" value="MurB_C_sf"/>
</dbReference>
<dbReference type="InterPro" id="IPR006094">
    <property type="entry name" value="Oxid_FAD_bind_N"/>
</dbReference>
<dbReference type="NCBIfam" id="TIGR00179">
    <property type="entry name" value="murB"/>
    <property type="match status" value="1"/>
</dbReference>
<dbReference type="NCBIfam" id="NF000755">
    <property type="entry name" value="PRK00046.1"/>
    <property type="match status" value="1"/>
</dbReference>
<dbReference type="NCBIfam" id="NF010478">
    <property type="entry name" value="PRK13903.1"/>
    <property type="match status" value="1"/>
</dbReference>
<dbReference type="PANTHER" id="PTHR21071">
    <property type="entry name" value="UDP-N-ACETYLENOLPYRUVOYLGLUCOSAMINE REDUCTASE"/>
    <property type="match status" value="1"/>
</dbReference>
<dbReference type="PANTHER" id="PTHR21071:SF4">
    <property type="entry name" value="UDP-N-ACETYLENOLPYRUVOYLGLUCOSAMINE REDUCTASE"/>
    <property type="match status" value="1"/>
</dbReference>
<dbReference type="Pfam" id="PF01565">
    <property type="entry name" value="FAD_binding_4"/>
    <property type="match status" value="1"/>
</dbReference>
<dbReference type="Pfam" id="PF02873">
    <property type="entry name" value="MurB_C"/>
    <property type="match status" value="1"/>
</dbReference>
<dbReference type="SUPFAM" id="SSF56176">
    <property type="entry name" value="FAD-binding/transporter-associated domain-like"/>
    <property type="match status" value="1"/>
</dbReference>
<dbReference type="SUPFAM" id="SSF56194">
    <property type="entry name" value="Uridine diphospho-N-Acetylenolpyruvylglucosamine reductase, MurB, C-terminal domain"/>
    <property type="match status" value="1"/>
</dbReference>
<dbReference type="PROSITE" id="PS51387">
    <property type="entry name" value="FAD_PCMH"/>
    <property type="match status" value="1"/>
</dbReference>
<reference key="1">
    <citation type="submission" date="2007-03" db="EMBL/GenBank/DDBJ databases">
        <title>Complete sequence of chromosome 1 of Burkholderia vietnamiensis G4.</title>
        <authorList>
            <consortium name="US DOE Joint Genome Institute"/>
            <person name="Copeland A."/>
            <person name="Lucas S."/>
            <person name="Lapidus A."/>
            <person name="Barry K."/>
            <person name="Detter J.C."/>
            <person name="Glavina del Rio T."/>
            <person name="Hammon N."/>
            <person name="Israni S."/>
            <person name="Dalin E."/>
            <person name="Tice H."/>
            <person name="Pitluck S."/>
            <person name="Chain P."/>
            <person name="Malfatti S."/>
            <person name="Shin M."/>
            <person name="Vergez L."/>
            <person name="Schmutz J."/>
            <person name="Larimer F."/>
            <person name="Land M."/>
            <person name="Hauser L."/>
            <person name="Kyrpides N."/>
            <person name="Tiedje J."/>
            <person name="Richardson P."/>
        </authorList>
    </citation>
    <scope>NUCLEOTIDE SEQUENCE [LARGE SCALE GENOMIC DNA]</scope>
    <source>
        <strain>G4 / LMG 22486</strain>
    </source>
</reference>
<protein>
    <recommendedName>
        <fullName evidence="1">UDP-N-acetylenolpyruvoylglucosamine reductase</fullName>
        <ecNumber evidence="1">1.3.1.98</ecNumber>
    </recommendedName>
    <alternativeName>
        <fullName evidence="1">UDP-N-acetylmuramate dehydrogenase</fullName>
    </alternativeName>
</protein>
<accession>A4JH86</accession>
<comment type="function">
    <text evidence="1">Cell wall formation.</text>
</comment>
<comment type="catalytic activity">
    <reaction evidence="1">
        <text>UDP-N-acetyl-alpha-D-muramate + NADP(+) = UDP-N-acetyl-3-O-(1-carboxyvinyl)-alpha-D-glucosamine + NADPH + H(+)</text>
        <dbReference type="Rhea" id="RHEA:12248"/>
        <dbReference type="ChEBI" id="CHEBI:15378"/>
        <dbReference type="ChEBI" id="CHEBI:57783"/>
        <dbReference type="ChEBI" id="CHEBI:58349"/>
        <dbReference type="ChEBI" id="CHEBI:68483"/>
        <dbReference type="ChEBI" id="CHEBI:70757"/>
        <dbReference type="EC" id="1.3.1.98"/>
    </reaction>
</comment>
<comment type="cofactor">
    <cofactor evidence="1">
        <name>FAD</name>
        <dbReference type="ChEBI" id="CHEBI:57692"/>
    </cofactor>
</comment>
<comment type="pathway">
    <text evidence="1">Cell wall biogenesis; peptidoglycan biosynthesis.</text>
</comment>
<comment type="subcellular location">
    <subcellularLocation>
        <location evidence="1">Cytoplasm</location>
    </subcellularLocation>
</comment>
<comment type="similarity">
    <text evidence="1">Belongs to the MurB family.</text>
</comment>
<evidence type="ECO:0000255" key="1">
    <source>
        <dbReference type="HAMAP-Rule" id="MF_00037"/>
    </source>
</evidence>
<gene>
    <name evidence="1" type="primary">murB</name>
    <name type="ordered locus">Bcep1808_2647</name>
</gene>